<sequence length="365" mass="40219">MSKPAVKSVPSATAKTATRAVNIRQKVKAPKQAKPEAKGRAKPSKDKPRAEIKKALHPRNAHLNGYDFPALYAAFTQLKTFVRPTPYGTLSIDFADPLAVKTLNAALLKHHYGIGAWDIPQGALCPPIPGRVDYVHYVADLLAEGDKSCAMDKARVLDIGTGANGIYPILGCQVYGWQYVASDINAHSLTNVQSIIEQNPVLQGRISLRLQPDDKAVFKGVIQAEERFELTLCNPPFHASMAEASEGTKRKVNNLQLNRGSSVKAAPKLNFGGQAAELWCQGGERQFLATMIRESQMFADQCLWFTSLVSKQENLKPCYQALAQLNVDTVKTIEMQQGNKITRVLAWSFQSAAKRKIWRAEHLAN</sequence>
<accession>A3DAC9</accession>
<reference key="1">
    <citation type="submission" date="2007-02" db="EMBL/GenBank/DDBJ databases">
        <title>Complete sequence of chromosome of Shewanella baltica OS155.</title>
        <authorList>
            <consortium name="US DOE Joint Genome Institute"/>
            <person name="Copeland A."/>
            <person name="Lucas S."/>
            <person name="Lapidus A."/>
            <person name="Barry K."/>
            <person name="Detter J.C."/>
            <person name="Glavina del Rio T."/>
            <person name="Hammon N."/>
            <person name="Israni S."/>
            <person name="Dalin E."/>
            <person name="Tice H."/>
            <person name="Pitluck S."/>
            <person name="Sims D.R."/>
            <person name="Brettin T."/>
            <person name="Bruce D."/>
            <person name="Han C."/>
            <person name="Tapia R."/>
            <person name="Brainard J."/>
            <person name="Schmutz J."/>
            <person name="Larimer F."/>
            <person name="Land M."/>
            <person name="Hauser L."/>
            <person name="Kyrpides N."/>
            <person name="Mikhailova N."/>
            <person name="Brettar I."/>
            <person name="Klappenbach J."/>
            <person name="Konstantinidis K."/>
            <person name="Rodrigues J."/>
            <person name="Tiedje J."/>
            <person name="Richardson P."/>
        </authorList>
    </citation>
    <scope>NUCLEOTIDE SEQUENCE [LARGE SCALE GENOMIC DNA]</scope>
    <source>
        <strain>OS155 / ATCC BAA-1091</strain>
    </source>
</reference>
<gene>
    <name evidence="1" type="primary">rlmF</name>
    <name type="ordered locus">Sbal_4227</name>
</gene>
<keyword id="KW-0963">Cytoplasm</keyword>
<keyword id="KW-0489">Methyltransferase</keyword>
<keyword id="KW-1185">Reference proteome</keyword>
<keyword id="KW-0698">rRNA processing</keyword>
<keyword id="KW-0949">S-adenosyl-L-methionine</keyword>
<keyword id="KW-0808">Transferase</keyword>
<protein>
    <recommendedName>
        <fullName evidence="1">Ribosomal RNA large subunit methyltransferase F</fullName>
        <ecNumber evidence="1">2.1.1.181</ecNumber>
    </recommendedName>
    <alternativeName>
        <fullName evidence="1">23S rRNA mA1618 methyltransferase</fullName>
    </alternativeName>
    <alternativeName>
        <fullName evidence="1">rRNA adenine N-6-methyltransferase</fullName>
    </alternativeName>
</protein>
<comment type="function">
    <text evidence="1">Specifically methylates the adenine in position 1618 of 23S rRNA.</text>
</comment>
<comment type="catalytic activity">
    <reaction evidence="1">
        <text>adenosine(1618) in 23S rRNA + S-adenosyl-L-methionine = N(6)-methyladenosine(1618) in 23S rRNA + S-adenosyl-L-homocysteine + H(+)</text>
        <dbReference type="Rhea" id="RHEA:16497"/>
        <dbReference type="Rhea" id="RHEA-COMP:10229"/>
        <dbReference type="Rhea" id="RHEA-COMP:10231"/>
        <dbReference type="ChEBI" id="CHEBI:15378"/>
        <dbReference type="ChEBI" id="CHEBI:57856"/>
        <dbReference type="ChEBI" id="CHEBI:59789"/>
        <dbReference type="ChEBI" id="CHEBI:74411"/>
        <dbReference type="ChEBI" id="CHEBI:74449"/>
        <dbReference type="EC" id="2.1.1.181"/>
    </reaction>
</comment>
<comment type="subcellular location">
    <subcellularLocation>
        <location evidence="1">Cytoplasm</location>
    </subcellularLocation>
</comment>
<comment type="similarity">
    <text evidence="1">Belongs to the methyltransferase superfamily. METTL16/RlmF family.</text>
</comment>
<comment type="sequence caution" evidence="3">
    <conflict type="erroneous initiation">
        <sequence resource="EMBL-CDS" id="ABN63692"/>
    </conflict>
</comment>
<feature type="chain" id="PRO_0000349951" description="Ribosomal RNA large subunit methyltransferase F">
    <location>
        <begin position="1"/>
        <end position="365"/>
    </location>
</feature>
<feature type="region of interest" description="Disordered" evidence="2">
    <location>
        <begin position="1"/>
        <end position="50"/>
    </location>
</feature>
<feature type="compositionally biased region" description="Basic and acidic residues" evidence="2">
    <location>
        <begin position="33"/>
        <end position="50"/>
    </location>
</feature>
<organism>
    <name type="scientific">Shewanella baltica (strain OS155 / ATCC BAA-1091)</name>
    <dbReference type="NCBI Taxonomy" id="325240"/>
    <lineage>
        <taxon>Bacteria</taxon>
        <taxon>Pseudomonadati</taxon>
        <taxon>Pseudomonadota</taxon>
        <taxon>Gammaproteobacteria</taxon>
        <taxon>Alteromonadales</taxon>
        <taxon>Shewanellaceae</taxon>
        <taxon>Shewanella</taxon>
    </lineage>
</organism>
<proteinExistence type="inferred from homology"/>
<dbReference type="EC" id="2.1.1.181" evidence="1"/>
<dbReference type="EMBL" id="CP000563">
    <property type="protein sequence ID" value="ABN63692.1"/>
    <property type="status" value="ALT_INIT"/>
    <property type="molecule type" value="Genomic_DNA"/>
</dbReference>
<dbReference type="RefSeq" id="WP_014620903.1">
    <property type="nucleotide sequence ID" value="NC_009052.1"/>
</dbReference>
<dbReference type="SMR" id="A3DAC9"/>
<dbReference type="STRING" id="325240.Sbal_4227"/>
<dbReference type="KEGG" id="sbl:Sbal_4227"/>
<dbReference type="HOGENOM" id="CLU_027534_3_0_6"/>
<dbReference type="OrthoDB" id="1115728at2"/>
<dbReference type="Proteomes" id="UP000001557">
    <property type="component" value="Chromosome"/>
</dbReference>
<dbReference type="GO" id="GO:0005737">
    <property type="term" value="C:cytoplasm"/>
    <property type="evidence" value="ECO:0007669"/>
    <property type="project" value="UniProtKB-SubCell"/>
</dbReference>
<dbReference type="GO" id="GO:0052907">
    <property type="term" value="F:23S rRNA (adenine(1618)-N(6))-methyltransferase activity"/>
    <property type="evidence" value="ECO:0007669"/>
    <property type="project" value="UniProtKB-EC"/>
</dbReference>
<dbReference type="GO" id="GO:0070475">
    <property type="term" value="P:rRNA base methylation"/>
    <property type="evidence" value="ECO:0007669"/>
    <property type="project" value="TreeGrafter"/>
</dbReference>
<dbReference type="CDD" id="cd02440">
    <property type="entry name" value="AdoMet_MTases"/>
    <property type="match status" value="1"/>
</dbReference>
<dbReference type="Gene3D" id="3.40.50.150">
    <property type="entry name" value="Vaccinia Virus protein VP39"/>
    <property type="match status" value="1"/>
</dbReference>
<dbReference type="HAMAP" id="MF_01848">
    <property type="entry name" value="23SrRNA_methyltr_F"/>
    <property type="match status" value="1"/>
</dbReference>
<dbReference type="InterPro" id="IPR010286">
    <property type="entry name" value="METTL16/RlmF"/>
</dbReference>
<dbReference type="InterPro" id="IPR016909">
    <property type="entry name" value="rRNA_lsu_MeTfrase_F"/>
</dbReference>
<dbReference type="InterPro" id="IPR029063">
    <property type="entry name" value="SAM-dependent_MTases_sf"/>
</dbReference>
<dbReference type="NCBIfam" id="NF008725">
    <property type="entry name" value="PRK11727.1"/>
    <property type="match status" value="1"/>
</dbReference>
<dbReference type="PANTHER" id="PTHR13393:SF0">
    <property type="entry name" value="RNA N6-ADENOSINE-METHYLTRANSFERASE METTL16"/>
    <property type="match status" value="1"/>
</dbReference>
<dbReference type="PANTHER" id="PTHR13393">
    <property type="entry name" value="SAM-DEPENDENT METHYLTRANSFERASE"/>
    <property type="match status" value="1"/>
</dbReference>
<dbReference type="Pfam" id="PF05971">
    <property type="entry name" value="Methyltransf_10"/>
    <property type="match status" value="1"/>
</dbReference>
<dbReference type="PIRSF" id="PIRSF029038">
    <property type="entry name" value="Mtase_YbiN_prd"/>
    <property type="match status" value="1"/>
</dbReference>
<dbReference type="SUPFAM" id="SSF53335">
    <property type="entry name" value="S-adenosyl-L-methionine-dependent methyltransferases"/>
    <property type="match status" value="1"/>
</dbReference>
<evidence type="ECO:0000255" key="1">
    <source>
        <dbReference type="HAMAP-Rule" id="MF_01848"/>
    </source>
</evidence>
<evidence type="ECO:0000256" key="2">
    <source>
        <dbReference type="SAM" id="MobiDB-lite"/>
    </source>
</evidence>
<evidence type="ECO:0000305" key="3"/>
<name>RLMF_SHEB5</name>